<sequence length="576" mass="63838">MLRSFLCRSQNASRNLAVTRISKKKTQTTHSLTSLSRFSYLESSGNASVRNIRFFSTSPPTEENPVSLPADEIPISSAAELTLEESVASALGFSESGDYGGTSVEAVGEDGDSEIVAIENEVYQFDDEKLESVLSLLRSDEESLEFGLNALNVDLHLDFVVRVFESPGISGKNLIRFLKWATQNEEITVTTSLVESLLVAIASDTRRMDAYGLWDLVKEIGEKESCGVLNLEILNELIALFGKLGKSKAAFDVFSKTEEFGFTPNAKTYYLTLEALCKRSFMDWACSVCEKMLKSGVLSEGEQMGNIITWFCKEGKAEEAYSVYELAKTKEKSLPPRFVATLITALCKNDGTITFAQEMLGDLSGEARRRGIKPFSDVIHSLCRMRNVKDAKALLLDMISKGPAPGNAVFNLVVHACSKTGDLDEAKEVLKLMESRGLKPDVYTYTVIISGYAKGGMMDEAQEILAEAKKKHKKLSPVTYHALIRGYCKIEEYDEALKLLNEMDRFGVQPNADEYNKLIQSFCLKALDWEKAEVLFEEMKQKGLHLNAISQGLIRAVKEMESEAKVTEDGNLLAEA</sequence>
<evidence type="ECO:0000255" key="1"/>
<evidence type="ECO:0000303" key="2">
    <source>
    </source>
</evidence>
<evidence type="ECO:0000305" key="3"/>
<evidence type="ECO:0000305" key="4">
    <source>
    </source>
</evidence>
<proteinExistence type="evidence at protein level"/>
<accession>P0C896</accession>
<accession>Q9M877</accession>
<dbReference type="EMBL" id="AC021640">
    <property type="protein sequence ID" value="AAF32472.1"/>
    <property type="status" value="ALT_SEQ"/>
    <property type="molecule type" value="Genomic_DNA"/>
</dbReference>
<dbReference type="EMBL" id="CP002686">
    <property type="protein sequence ID" value="AEE73844.1"/>
    <property type="molecule type" value="Genomic_DNA"/>
</dbReference>
<dbReference type="EMBL" id="BX836963">
    <property type="status" value="NOT_ANNOTATED_CDS"/>
    <property type="molecule type" value="mRNA"/>
</dbReference>
<dbReference type="RefSeq" id="NP_186914.2">
    <property type="nucleotide sequence ID" value="NM_111133.4"/>
</dbReference>
<dbReference type="PDB" id="6XYW">
    <property type="method" value="EM"/>
    <property type="resolution" value="3.86 A"/>
    <property type="chains" value="BG=1-576"/>
</dbReference>
<dbReference type="PDBsum" id="6XYW"/>
<dbReference type="EMDB" id="EMD-10654"/>
<dbReference type="SMR" id="P0C896"/>
<dbReference type="BioGRID" id="6618">
    <property type="interactions" value="4"/>
</dbReference>
<dbReference type="FunCoup" id="P0C896">
    <property type="interactions" value="1767"/>
</dbReference>
<dbReference type="IntAct" id="P0C896">
    <property type="interactions" value="1"/>
</dbReference>
<dbReference type="STRING" id="3702.P0C896"/>
<dbReference type="iPTMnet" id="P0C896"/>
<dbReference type="PaxDb" id="3702-AT3G02650.1"/>
<dbReference type="ProteomicsDB" id="249087"/>
<dbReference type="EnsemblPlants" id="AT3G02650.1">
    <property type="protein sequence ID" value="AT3G02650.1"/>
    <property type="gene ID" value="AT3G02650"/>
</dbReference>
<dbReference type="GeneID" id="821285"/>
<dbReference type="Gramene" id="AT3G02650.1">
    <property type="protein sequence ID" value="AT3G02650.1"/>
    <property type="gene ID" value="AT3G02650"/>
</dbReference>
<dbReference type="KEGG" id="ath:AT3G02650"/>
<dbReference type="Araport" id="AT3G02650"/>
<dbReference type="TAIR" id="AT3G02650"/>
<dbReference type="eggNOG" id="KOG4197">
    <property type="taxonomic scope" value="Eukaryota"/>
</dbReference>
<dbReference type="HOGENOM" id="CLU_029890_0_0_1"/>
<dbReference type="InParanoid" id="P0C896"/>
<dbReference type="OMA" id="RRAYDWA"/>
<dbReference type="PhylomeDB" id="P0C896"/>
<dbReference type="PRO" id="PR:P0C896"/>
<dbReference type="Proteomes" id="UP000006548">
    <property type="component" value="Chromosome 3"/>
</dbReference>
<dbReference type="ExpressionAtlas" id="P0C896">
    <property type="expression patterns" value="baseline and differential"/>
</dbReference>
<dbReference type="GO" id="GO:0005739">
    <property type="term" value="C:mitochondrion"/>
    <property type="evidence" value="ECO:0007669"/>
    <property type="project" value="UniProtKB-SubCell"/>
</dbReference>
<dbReference type="GO" id="GO:1990904">
    <property type="term" value="C:ribonucleoprotein complex"/>
    <property type="evidence" value="ECO:0007669"/>
    <property type="project" value="UniProtKB-KW"/>
</dbReference>
<dbReference type="GO" id="GO:0005840">
    <property type="term" value="C:ribosome"/>
    <property type="evidence" value="ECO:0007669"/>
    <property type="project" value="UniProtKB-KW"/>
</dbReference>
<dbReference type="GO" id="GO:0003729">
    <property type="term" value="F:mRNA binding"/>
    <property type="evidence" value="ECO:0000314"/>
    <property type="project" value="TAIR"/>
</dbReference>
<dbReference type="Gene3D" id="1.25.40.10">
    <property type="entry name" value="Tetratricopeptide repeat domain"/>
    <property type="match status" value="3"/>
</dbReference>
<dbReference type="InterPro" id="IPR002885">
    <property type="entry name" value="Pentatricopeptide_rpt"/>
</dbReference>
<dbReference type="InterPro" id="IPR011990">
    <property type="entry name" value="TPR-like_helical_dom_sf"/>
</dbReference>
<dbReference type="NCBIfam" id="TIGR00756">
    <property type="entry name" value="PPR"/>
    <property type="match status" value="4"/>
</dbReference>
<dbReference type="PANTHER" id="PTHR47938:SF35">
    <property type="entry name" value="PENTATRICOPEPTIDE REPEAT-CONTAINING PROTEIN 4, MITOCHONDRIAL-RELATED"/>
    <property type="match status" value="1"/>
</dbReference>
<dbReference type="PANTHER" id="PTHR47938">
    <property type="entry name" value="RESPIRATORY COMPLEX I CHAPERONE (CIA84), PUTATIVE (AFU_ORTHOLOGUE AFUA_2G06020)-RELATED"/>
    <property type="match status" value="1"/>
</dbReference>
<dbReference type="Pfam" id="PF01535">
    <property type="entry name" value="PPR"/>
    <property type="match status" value="4"/>
</dbReference>
<dbReference type="Pfam" id="PF13041">
    <property type="entry name" value="PPR_2"/>
    <property type="match status" value="2"/>
</dbReference>
<dbReference type="PROSITE" id="PS51375">
    <property type="entry name" value="PPR"/>
    <property type="match status" value="8"/>
</dbReference>
<keyword id="KW-0002">3D-structure</keyword>
<keyword id="KW-0496">Mitochondrion</keyword>
<keyword id="KW-1185">Reference proteome</keyword>
<keyword id="KW-0677">Repeat</keyword>
<keyword id="KW-0687">Ribonucleoprotein</keyword>
<keyword id="KW-0689">Ribosomal protein</keyword>
<keyword id="KW-0809">Transit peptide</keyword>
<protein>
    <recommendedName>
        <fullName evidence="2">Small ribosomal subunit protein mS80 (rPPR6)</fullName>
    </recommendedName>
    <alternativeName>
        <fullName>Pentatricopeptide repeat-containing protein At3g02650, mitochondrial</fullName>
    </alternativeName>
</protein>
<reference key="1">
    <citation type="journal article" date="2000" name="Nature">
        <title>Sequence and analysis of chromosome 3 of the plant Arabidopsis thaliana.</title>
        <authorList>
            <person name="Salanoubat M."/>
            <person name="Lemcke K."/>
            <person name="Rieger M."/>
            <person name="Ansorge W."/>
            <person name="Unseld M."/>
            <person name="Fartmann B."/>
            <person name="Valle G."/>
            <person name="Bloecker H."/>
            <person name="Perez-Alonso M."/>
            <person name="Obermaier B."/>
            <person name="Delseny M."/>
            <person name="Boutry M."/>
            <person name="Grivell L.A."/>
            <person name="Mache R."/>
            <person name="Puigdomenech P."/>
            <person name="De Simone V."/>
            <person name="Choisne N."/>
            <person name="Artiguenave F."/>
            <person name="Robert C."/>
            <person name="Brottier P."/>
            <person name="Wincker P."/>
            <person name="Cattolico L."/>
            <person name="Weissenbach J."/>
            <person name="Saurin W."/>
            <person name="Quetier F."/>
            <person name="Schaefer M."/>
            <person name="Mueller-Auer S."/>
            <person name="Gabel C."/>
            <person name="Fuchs M."/>
            <person name="Benes V."/>
            <person name="Wurmbach E."/>
            <person name="Drzonek H."/>
            <person name="Erfle H."/>
            <person name="Jordan N."/>
            <person name="Bangert S."/>
            <person name="Wiedelmann R."/>
            <person name="Kranz H."/>
            <person name="Voss H."/>
            <person name="Holland R."/>
            <person name="Brandt P."/>
            <person name="Nyakatura G."/>
            <person name="Vezzi A."/>
            <person name="D'Angelo M."/>
            <person name="Pallavicini A."/>
            <person name="Toppo S."/>
            <person name="Simionati B."/>
            <person name="Conrad A."/>
            <person name="Hornischer K."/>
            <person name="Kauer G."/>
            <person name="Loehnert T.-H."/>
            <person name="Nordsiek G."/>
            <person name="Reichelt J."/>
            <person name="Scharfe M."/>
            <person name="Schoen O."/>
            <person name="Bargues M."/>
            <person name="Terol J."/>
            <person name="Climent J."/>
            <person name="Navarro P."/>
            <person name="Collado C."/>
            <person name="Perez-Perez A."/>
            <person name="Ottenwaelder B."/>
            <person name="Duchemin D."/>
            <person name="Cooke R."/>
            <person name="Laudie M."/>
            <person name="Berger-Llauro C."/>
            <person name="Purnelle B."/>
            <person name="Masuy D."/>
            <person name="de Haan M."/>
            <person name="Maarse A.C."/>
            <person name="Alcaraz J.-P."/>
            <person name="Cottet A."/>
            <person name="Casacuberta E."/>
            <person name="Monfort A."/>
            <person name="Argiriou A."/>
            <person name="Flores M."/>
            <person name="Liguori R."/>
            <person name="Vitale D."/>
            <person name="Mannhaupt G."/>
            <person name="Haase D."/>
            <person name="Schoof H."/>
            <person name="Rudd S."/>
            <person name="Zaccaria P."/>
            <person name="Mewes H.-W."/>
            <person name="Mayer K.F.X."/>
            <person name="Kaul S."/>
            <person name="Town C.D."/>
            <person name="Koo H.L."/>
            <person name="Tallon L.J."/>
            <person name="Jenkins J."/>
            <person name="Rooney T."/>
            <person name="Rizzo M."/>
            <person name="Walts A."/>
            <person name="Utterback T."/>
            <person name="Fujii C.Y."/>
            <person name="Shea T.P."/>
            <person name="Creasy T.H."/>
            <person name="Haas B."/>
            <person name="Maiti R."/>
            <person name="Wu D."/>
            <person name="Peterson J."/>
            <person name="Van Aken S."/>
            <person name="Pai G."/>
            <person name="Militscher J."/>
            <person name="Sellers P."/>
            <person name="Gill J.E."/>
            <person name="Feldblyum T.V."/>
            <person name="Preuss D."/>
            <person name="Lin X."/>
            <person name="Nierman W.C."/>
            <person name="Salzberg S.L."/>
            <person name="White O."/>
            <person name="Venter J.C."/>
            <person name="Fraser C.M."/>
            <person name="Kaneko T."/>
            <person name="Nakamura Y."/>
            <person name="Sato S."/>
            <person name="Kato T."/>
            <person name="Asamizu E."/>
            <person name="Sasamoto S."/>
            <person name="Kimura T."/>
            <person name="Idesawa K."/>
            <person name="Kawashima K."/>
            <person name="Kishida Y."/>
            <person name="Kiyokawa C."/>
            <person name="Kohara M."/>
            <person name="Matsumoto M."/>
            <person name="Matsuno A."/>
            <person name="Muraki A."/>
            <person name="Nakayama S."/>
            <person name="Nakazaki N."/>
            <person name="Shinpo S."/>
            <person name="Takeuchi C."/>
            <person name="Wada T."/>
            <person name="Watanabe A."/>
            <person name="Yamada M."/>
            <person name="Yasuda M."/>
            <person name="Tabata S."/>
        </authorList>
    </citation>
    <scope>NUCLEOTIDE SEQUENCE [LARGE SCALE GENOMIC DNA]</scope>
    <source>
        <strain>cv. Columbia</strain>
    </source>
</reference>
<reference key="2">
    <citation type="journal article" date="2017" name="Plant J.">
        <title>Araport11: a complete reannotation of the Arabidopsis thaliana reference genome.</title>
        <authorList>
            <person name="Cheng C.Y."/>
            <person name="Krishnakumar V."/>
            <person name="Chan A.P."/>
            <person name="Thibaud-Nissen F."/>
            <person name="Schobel S."/>
            <person name="Town C.D."/>
        </authorList>
    </citation>
    <scope>GENOME REANNOTATION</scope>
    <source>
        <strain>cv. Columbia</strain>
    </source>
</reference>
<reference key="3">
    <citation type="journal article" date="2004" name="Genome Res.">
        <title>Whole genome sequence comparisons and 'full-length' cDNA sequences: a combined approach to evaluate and improve Arabidopsis genome annotation.</title>
        <authorList>
            <person name="Castelli V."/>
            <person name="Aury J.-M."/>
            <person name="Jaillon O."/>
            <person name="Wincker P."/>
            <person name="Clepet C."/>
            <person name="Menard M."/>
            <person name="Cruaud C."/>
            <person name="Quetier F."/>
            <person name="Scarpelli C."/>
            <person name="Schaechter V."/>
            <person name="Temple G."/>
            <person name="Caboche M."/>
            <person name="Weissenbach J."/>
            <person name="Salanoubat M."/>
        </authorList>
    </citation>
    <scope>NUCLEOTIDE SEQUENCE [LARGE SCALE MRNA]</scope>
    <source>
        <strain>cv. Columbia</strain>
    </source>
</reference>
<reference key="4">
    <citation type="journal article" date="2004" name="Plant Cell">
        <title>Genome-wide analysis of Arabidopsis pentatricopeptide repeat proteins reveals their essential role in organelle biogenesis.</title>
        <authorList>
            <person name="Lurin C."/>
            <person name="Andres C."/>
            <person name="Aubourg S."/>
            <person name="Bellaoui M."/>
            <person name="Bitton F."/>
            <person name="Bruyere C."/>
            <person name="Caboche M."/>
            <person name="Debast C."/>
            <person name="Gualberto J."/>
            <person name="Hoffmann B."/>
            <person name="Lecharny A."/>
            <person name="Le Ret M."/>
            <person name="Martin-Magniette M.-L."/>
            <person name="Mireau H."/>
            <person name="Peeters N."/>
            <person name="Renou J.-P."/>
            <person name="Szurek B."/>
            <person name="Taconnat L."/>
            <person name="Small I."/>
        </authorList>
    </citation>
    <scope>GENE FAMILY</scope>
</reference>
<reference key="5">
    <citation type="journal article" date="2023" name="Plant Cell">
        <title>An updated nomenclature for plant ribosomal protein genes.</title>
        <authorList>
            <person name="Scarpin M.R."/>
            <person name="Busche M."/>
            <person name="Martinez R.E."/>
            <person name="Harper L.C."/>
            <person name="Reiser L."/>
            <person name="Szakonyi D."/>
            <person name="Merchante C."/>
            <person name="Lan T."/>
            <person name="Xiong W."/>
            <person name="Mo B."/>
            <person name="Tang G."/>
            <person name="Chen X."/>
            <person name="Bailey-Serres J."/>
            <person name="Browning K.S."/>
            <person name="Brunkard J.O."/>
        </authorList>
    </citation>
    <scope>NOMENCLATURE</scope>
</reference>
<gene>
    <name type="ordered locus">At3g02650</name>
    <name type="ORF">F16B3.28</name>
</gene>
<organism>
    <name type="scientific">Arabidopsis thaliana</name>
    <name type="common">Mouse-ear cress</name>
    <dbReference type="NCBI Taxonomy" id="3702"/>
    <lineage>
        <taxon>Eukaryota</taxon>
        <taxon>Viridiplantae</taxon>
        <taxon>Streptophyta</taxon>
        <taxon>Embryophyta</taxon>
        <taxon>Tracheophyta</taxon>
        <taxon>Spermatophyta</taxon>
        <taxon>Magnoliopsida</taxon>
        <taxon>eudicotyledons</taxon>
        <taxon>Gunneridae</taxon>
        <taxon>Pentapetalae</taxon>
        <taxon>rosids</taxon>
        <taxon>malvids</taxon>
        <taxon>Brassicales</taxon>
        <taxon>Brassicaceae</taxon>
        <taxon>Camelineae</taxon>
        <taxon>Arabidopsis</taxon>
    </lineage>
</organism>
<feature type="transit peptide" description="Mitochondrion" evidence="1">
    <location>
        <begin position="1"/>
        <end position="76"/>
    </location>
</feature>
<feature type="chain" id="PRO_0000356068" description="Small ribosomal subunit protein mS80 (rPPR6)">
    <location>
        <begin position="77"/>
        <end position="576"/>
    </location>
</feature>
<feature type="repeat" description="PPR 1">
    <location>
        <begin position="230"/>
        <end position="264"/>
    </location>
</feature>
<feature type="repeat" description="PPR 2">
    <location>
        <begin position="265"/>
        <end position="299"/>
    </location>
</feature>
<feature type="repeat" description="PPR 3">
    <location>
        <begin position="300"/>
        <end position="336"/>
    </location>
</feature>
<feature type="repeat" description="PPR 4">
    <location>
        <begin position="341"/>
        <end position="370"/>
    </location>
</feature>
<feature type="repeat" description="PPR 5">
    <location>
        <begin position="371"/>
        <end position="405"/>
    </location>
</feature>
<feature type="repeat" description="PPR 6">
    <location>
        <begin position="406"/>
        <end position="440"/>
    </location>
</feature>
<feature type="repeat" description="PPR 7">
    <location>
        <begin position="441"/>
        <end position="475"/>
    </location>
</feature>
<feature type="repeat" description="PPR 8">
    <location>
        <begin position="476"/>
        <end position="510"/>
    </location>
</feature>
<feature type="repeat" description="PPR 9">
    <location>
        <begin position="511"/>
        <end position="546"/>
    </location>
</feature>
<comment type="subunit">
    <text evidence="4">Component of the mitochondrial ribosome small subunit.</text>
</comment>
<comment type="subcellular location">
    <subcellularLocation>
        <location evidence="2 3">Mitochondrion</location>
    </subcellularLocation>
</comment>
<comment type="similarity">
    <text evidence="3">Belongs to the PPR family. P subfamily.</text>
</comment>
<comment type="sequence caution" evidence="3">
    <conflict type="erroneous gene model prediction">
        <sequence resource="EMBL-CDS" id="AAF32472"/>
    </conflict>
    <text>The predicted gene has been split into 2 genes: At3g02645 and At3g02650.</text>
</comment>
<comment type="sequence caution" evidence="3">
    <conflict type="miscellaneous discrepancy">
        <sequence resource="EMBL" id="BX836963"/>
    </conflict>
    <text>Sequencing errors.</text>
</comment>
<comment type="online information" name="Pentatricopeptide repeat proteins">
    <link uri="https://ppr.plantenergy.uwa.edu.au"/>
</comment>
<name>PP209_ARATH</name>